<sequence>MTNTTGKINLLGLTQPEMEQFFESIGEKRFRAGQVMKWIHHFGVDDFAAMTNVGKALREKLEASAEIRGPEVVSENISADGTRKWVVRVASGSCVETVYIPQNGRGTLCVSSQAGCALDCSFCSTGKQGFNSDLTSAEIIGQVWIANKSFGTVPAKIDRAITNVVMMGMGEPLLNFDNVVSAMQIMMDDLGYGISKRKVTLSTSGVVPMIDKLAEVIDVSLALSLHAPNDELRNQLVPINKKYPLDMLLAACKRYVAKLGEKRVLTIEYTLLKGVNDQPEHAEQMIALLADVPCKINLIPFNPFPFSGYERPSNNAIRRFQDLLHKAGHNVTVRTTRGDDIDAACGQLVGQVMDRTRRSERYIAVRQLGSEAQEPRAAANRN</sequence>
<reference key="1">
    <citation type="submission" date="2007-04" db="EMBL/GenBank/DDBJ databases">
        <title>Complete sequence of Pseudomonas mendocina ymp.</title>
        <authorList>
            <consortium name="US DOE Joint Genome Institute"/>
            <person name="Copeland A."/>
            <person name="Lucas S."/>
            <person name="Lapidus A."/>
            <person name="Barry K."/>
            <person name="Glavina del Rio T."/>
            <person name="Dalin E."/>
            <person name="Tice H."/>
            <person name="Pitluck S."/>
            <person name="Kiss H."/>
            <person name="Brettin T."/>
            <person name="Detter J.C."/>
            <person name="Bruce D."/>
            <person name="Han C."/>
            <person name="Schmutz J."/>
            <person name="Larimer F."/>
            <person name="Land M."/>
            <person name="Hauser L."/>
            <person name="Kyrpides N."/>
            <person name="Mikhailova N."/>
            <person name="Hersman L."/>
            <person name="Dubois J."/>
            <person name="Maurice P."/>
            <person name="Richardson P."/>
        </authorList>
    </citation>
    <scope>NUCLEOTIDE SEQUENCE [LARGE SCALE GENOMIC DNA]</scope>
    <source>
        <strain>ymp</strain>
    </source>
</reference>
<name>RLMN_ECTM1</name>
<gene>
    <name evidence="1" type="primary">rlmN</name>
    <name type="ordered locus">Pmen_3503</name>
</gene>
<evidence type="ECO:0000255" key="1">
    <source>
        <dbReference type="HAMAP-Rule" id="MF_01849"/>
    </source>
</evidence>
<evidence type="ECO:0000255" key="2">
    <source>
        <dbReference type="PROSITE-ProRule" id="PRU01266"/>
    </source>
</evidence>
<accession>A4XY35</accession>
<protein>
    <recommendedName>
        <fullName evidence="1">Dual-specificity RNA methyltransferase RlmN</fullName>
        <ecNumber evidence="1">2.1.1.192</ecNumber>
    </recommendedName>
    <alternativeName>
        <fullName evidence="1">23S rRNA (adenine(2503)-C(2))-methyltransferase</fullName>
    </alternativeName>
    <alternativeName>
        <fullName evidence="1">23S rRNA m2A2503 methyltransferase</fullName>
    </alternativeName>
    <alternativeName>
        <fullName evidence="1">Ribosomal RNA large subunit methyltransferase N</fullName>
    </alternativeName>
    <alternativeName>
        <fullName evidence="1">tRNA (adenine(37)-C(2))-methyltransferase</fullName>
    </alternativeName>
    <alternativeName>
        <fullName evidence="1">tRNA m2A37 methyltransferase</fullName>
    </alternativeName>
</protein>
<dbReference type="EC" id="2.1.1.192" evidence="1"/>
<dbReference type="EMBL" id="CP000680">
    <property type="protein sequence ID" value="ABP86251.1"/>
    <property type="molecule type" value="Genomic_DNA"/>
</dbReference>
<dbReference type="SMR" id="A4XY35"/>
<dbReference type="STRING" id="399739.Pmen_3503"/>
<dbReference type="KEGG" id="pmy:Pmen_3503"/>
<dbReference type="PATRIC" id="fig|399739.8.peg.3549"/>
<dbReference type="eggNOG" id="COG0820">
    <property type="taxonomic scope" value="Bacteria"/>
</dbReference>
<dbReference type="HOGENOM" id="CLU_029101_0_0_6"/>
<dbReference type="OrthoDB" id="9793973at2"/>
<dbReference type="GO" id="GO:0005737">
    <property type="term" value="C:cytoplasm"/>
    <property type="evidence" value="ECO:0007669"/>
    <property type="project" value="UniProtKB-SubCell"/>
</dbReference>
<dbReference type="GO" id="GO:0051539">
    <property type="term" value="F:4 iron, 4 sulfur cluster binding"/>
    <property type="evidence" value="ECO:0007669"/>
    <property type="project" value="UniProtKB-UniRule"/>
</dbReference>
<dbReference type="GO" id="GO:0046872">
    <property type="term" value="F:metal ion binding"/>
    <property type="evidence" value="ECO:0007669"/>
    <property type="project" value="UniProtKB-KW"/>
</dbReference>
<dbReference type="GO" id="GO:0070040">
    <property type="term" value="F:rRNA (adenine(2503)-C2-)-methyltransferase activity"/>
    <property type="evidence" value="ECO:0007669"/>
    <property type="project" value="UniProtKB-UniRule"/>
</dbReference>
<dbReference type="GO" id="GO:0019843">
    <property type="term" value="F:rRNA binding"/>
    <property type="evidence" value="ECO:0007669"/>
    <property type="project" value="UniProtKB-UniRule"/>
</dbReference>
<dbReference type="GO" id="GO:0002935">
    <property type="term" value="F:tRNA (adenine(37)-C2)-methyltransferase activity"/>
    <property type="evidence" value="ECO:0007669"/>
    <property type="project" value="UniProtKB-UniRule"/>
</dbReference>
<dbReference type="GO" id="GO:0000049">
    <property type="term" value="F:tRNA binding"/>
    <property type="evidence" value="ECO:0007669"/>
    <property type="project" value="UniProtKB-UniRule"/>
</dbReference>
<dbReference type="GO" id="GO:0070475">
    <property type="term" value="P:rRNA base methylation"/>
    <property type="evidence" value="ECO:0007669"/>
    <property type="project" value="UniProtKB-UniRule"/>
</dbReference>
<dbReference type="GO" id="GO:0030488">
    <property type="term" value="P:tRNA methylation"/>
    <property type="evidence" value="ECO:0007669"/>
    <property type="project" value="UniProtKB-UniRule"/>
</dbReference>
<dbReference type="CDD" id="cd01335">
    <property type="entry name" value="Radical_SAM"/>
    <property type="match status" value="1"/>
</dbReference>
<dbReference type="FunFam" id="1.10.150.530:FF:000003">
    <property type="entry name" value="Dual-specificity RNA methyltransferase RlmN"/>
    <property type="match status" value="1"/>
</dbReference>
<dbReference type="FunFam" id="3.20.20.70:FF:000008">
    <property type="entry name" value="Dual-specificity RNA methyltransferase RlmN"/>
    <property type="match status" value="1"/>
</dbReference>
<dbReference type="Gene3D" id="1.10.150.530">
    <property type="match status" value="1"/>
</dbReference>
<dbReference type="Gene3D" id="3.20.20.70">
    <property type="entry name" value="Aldolase class I"/>
    <property type="match status" value="1"/>
</dbReference>
<dbReference type="HAMAP" id="MF_01849">
    <property type="entry name" value="RNA_methyltr_RlmN"/>
    <property type="match status" value="1"/>
</dbReference>
<dbReference type="InterPro" id="IPR013785">
    <property type="entry name" value="Aldolase_TIM"/>
</dbReference>
<dbReference type="InterPro" id="IPR040072">
    <property type="entry name" value="Methyltransferase_A"/>
</dbReference>
<dbReference type="InterPro" id="IPR048641">
    <property type="entry name" value="RlmN_N"/>
</dbReference>
<dbReference type="InterPro" id="IPR027492">
    <property type="entry name" value="RNA_MTrfase_RlmN"/>
</dbReference>
<dbReference type="InterPro" id="IPR004383">
    <property type="entry name" value="rRNA_lsu_MTrfase_RlmN/Cfr"/>
</dbReference>
<dbReference type="InterPro" id="IPR007197">
    <property type="entry name" value="rSAM"/>
</dbReference>
<dbReference type="NCBIfam" id="TIGR00048">
    <property type="entry name" value="rRNA_mod_RlmN"/>
    <property type="match status" value="1"/>
</dbReference>
<dbReference type="PANTHER" id="PTHR30544">
    <property type="entry name" value="23S RRNA METHYLTRANSFERASE"/>
    <property type="match status" value="1"/>
</dbReference>
<dbReference type="PANTHER" id="PTHR30544:SF5">
    <property type="entry name" value="RADICAL SAM CORE DOMAIN-CONTAINING PROTEIN"/>
    <property type="match status" value="1"/>
</dbReference>
<dbReference type="Pfam" id="PF04055">
    <property type="entry name" value="Radical_SAM"/>
    <property type="match status" value="1"/>
</dbReference>
<dbReference type="Pfam" id="PF21016">
    <property type="entry name" value="RlmN_N"/>
    <property type="match status" value="1"/>
</dbReference>
<dbReference type="PIRSF" id="PIRSF006004">
    <property type="entry name" value="CHP00048"/>
    <property type="match status" value="1"/>
</dbReference>
<dbReference type="SFLD" id="SFLDF00275">
    <property type="entry name" value="adenosine_C2_methyltransferase"/>
    <property type="match status" value="1"/>
</dbReference>
<dbReference type="SFLD" id="SFLDG01062">
    <property type="entry name" value="methyltransferase_(Class_A)"/>
    <property type="match status" value="1"/>
</dbReference>
<dbReference type="SUPFAM" id="SSF102114">
    <property type="entry name" value="Radical SAM enzymes"/>
    <property type="match status" value="1"/>
</dbReference>
<dbReference type="PROSITE" id="PS51918">
    <property type="entry name" value="RADICAL_SAM"/>
    <property type="match status" value="1"/>
</dbReference>
<proteinExistence type="inferred from homology"/>
<keyword id="KW-0004">4Fe-4S</keyword>
<keyword id="KW-0963">Cytoplasm</keyword>
<keyword id="KW-1015">Disulfide bond</keyword>
<keyword id="KW-0408">Iron</keyword>
<keyword id="KW-0411">Iron-sulfur</keyword>
<keyword id="KW-0479">Metal-binding</keyword>
<keyword id="KW-0489">Methyltransferase</keyword>
<keyword id="KW-0698">rRNA processing</keyword>
<keyword id="KW-0949">S-adenosyl-L-methionine</keyword>
<keyword id="KW-0808">Transferase</keyword>
<keyword id="KW-0819">tRNA processing</keyword>
<feature type="chain" id="PRO_0000350339" description="Dual-specificity RNA methyltransferase RlmN">
    <location>
        <begin position="1"/>
        <end position="382"/>
    </location>
</feature>
<feature type="domain" description="Radical SAM core" evidence="2">
    <location>
        <begin position="102"/>
        <end position="340"/>
    </location>
</feature>
<feature type="active site" description="Proton acceptor" evidence="1">
    <location>
        <position position="96"/>
    </location>
</feature>
<feature type="active site" description="S-methylcysteine intermediate" evidence="1">
    <location>
        <position position="345"/>
    </location>
</feature>
<feature type="binding site" evidence="1">
    <location>
        <position position="116"/>
    </location>
    <ligand>
        <name>[4Fe-4S] cluster</name>
        <dbReference type="ChEBI" id="CHEBI:49883"/>
        <note>4Fe-4S-S-AdoMet</note>
    </ligand>
</feature>
<feature type="binding site" evidence="1">
    <location>
        <position position="120"/>
    </location>
    <ligand>
        <name>[4Fe-4S] cluster</name>
        <dbReference type="ChEBI" id="CHEBI:49883"/>
        <note>4Fe-4S-S-AdoMet</note>
    </ligand>
</feature>
<feature type="binding site" evidence="1">
    <location>
        <position position="123"/>
    </location>
    <ligand>
        <name>[4Fe-4S] cluster</name>
        <dbReference type="ChEBI" id="CHEBI:49883"/>
        <note>4Fe-4S-S-AdoMet</note>
    </ligand>
</feature>
<feature type="binding site" evidence="1">
    <location>
        <begin position="170"/>
        <end position="171"/>
    </location>
    <ligand>
        <name>S-adenosyl-L-methionine</name>
        <dbReference type="ChEBI" id="CHEBI:59789"/>
    </ligand>
</feature>
<feature type="binding site" evidence="1">
    <location>
        <position position="202"/>
    </location>
    <ligand>
        <name>S-adenosyl-L-methionine</name>
        <dbReference type="ChEBI" id="CHEBI:59789"/>
    </ligand>
</feature>
<feature type="binding site" evidence="1">
    <location>
        <begin position="224"/>
        <end position="226"/>
    </location>
    <ligand>
        <name>S-adenosyl-L-methionine</name>
        <dbReference type="ChEBI" id="CHEBI:59789"/>
    </ligand>
</feature>
<feature type="binding site" evidence="1">
    <location>
        <position position="302"/>
    </location>
    <ligand>
        <name>S-adenosyl-L-methionine</name>
        <dbReference type="ChEBI" id="CHEBI:59789"/>
    </ligand>
</feature>
<feature type="disulfide bond" description="(transient)" evidence="1">
    <location>
        <begin position="109"/>
        <end position="345"/>
    </location>
</feature>
<organism>
    <name type="scientific">Ectopseudomonas mendocina (strain ymp)</name>
    <name type="common">Pseudomonas mendocina</name>
    <dbReference type="NCBI Taxonomy" id="399739"/>
    <lineage>
        <taxon>Bacteria</taxon>
        <taxon>Pseudomonadati</taxon>
        <taxon>Pseudomonadota</taxon>
        <taxon>Gammaproteobacteria</taxon>
        <taxon>Pseudomonadales</taxon>
        <taxon>Pseudomonadaceae</taxon>
        <taxon>Ectopseudomonas</taxon>
    </lineage>
</organism>
<comment type="function">
    <text evidence="1">Specifically methylates position 2 of adenine 2503 in 23S rRNA and position 2 of adenine 37 in tRNAs. m2A2503 modification seems to play a crucial role in the proofreading step occurring at the peptidyl transferase center and thus would serve to optimize ribosomal fidelity.</text>
</comment>
<comment type="catalytic activity">
    <reaction evidence="1">
        <text>adenosine(2503) in 23S rRNA + 2 reduced [2Fe-2S]-[ferredoxin] + 2 S-adenosyl-L-methionine = 2-methyladenosine(2503) in 23S rRNA + 5'-deoxyadenosine + L-methionine + 2 oxidized [2Fe-2S]-[ferredoxin] + S-adenosyl-L-homocysteine</text>
        <dbReference type="Rhea" id="RHEA:42916"/>
        <dbReference type="Rhea" id="RHEA-COMP:10000"/>
        <dbReference type="Rhea" id="RHEA-COMP:10001"/>
        <dbReference type="Rhea" id="RHEA-COMP:10152"/>
        <dbReference type="Rhea" id="RHEA-COMP:10282"/>
        <dbReference type="ChEBI" id="CHEBI:17319"/>
        <dbReference type="ChEBI" id="CHEBI:33737"/>
        <dbReference type="ChEBI" id="CHEBI:33738"/>
        <dbReference type="ChEBI" id="CHEBI:57844"/>
        <dbReference type="ChEBI" id="CHEBI:57856"/>
        <dbReference type="ChEBI" id="CHEBI:59789"/>
        <dbReference type="ChEBI" id="CHEBI:74411"/>
        <dbReference type="ChEBI" id="CHEBI:74497"/>
        <dbReference type="EC" id="2.1.1.192"/>
    </reaction>
</comment>
<comment type="catalytic activity">
    <reaction evidence="1">
        <text>adenosine(37) in tRNA + 2 reduced [2Fe-2S]-[ferredoxin] + 2 S-adenosyl-L-methionine = 2-methyladenosine(37) in tRNA + 5'-deoxyadenosine + L-methionine + 2 oxidized [2Fe-2S]-[ferredoxin] + S-adenosyl-L-homocysteine</text>
        <dbReference type="Rhea" id="RHEA:43332"/>
        <dbReference type="Rhea" id="RHEA-COMP:10000"/>
        <dbReference type="Rhea" id="RHEA-COMP:10001"/>
        <dbReference type="Rhea" id="RHEA-COMP:10162"/>
        <dbReference type="Rhea" id="RHEA-COMP:10485"/>
        <dbReference type="ChEBI" id="CHEBI:17319"/>
        <dbReference type="ChEBI" id="CHEBI:33737"/>
        <dbReference type="ChEBI" id="CHEBI:33738"/>
        <dbReference type="ChEBI" id="CHEBI:57844"/>
        <dbReference type="ChEBI" id="CHEBI:57856"/>
        <dbReference type="ChEBI" id="CHEBI:59789"/>
        <dbReference type="ChEBI" id="CHEBI:74411"/>
        <dbReference type="ChEBI" id="CHEBI:74497"/>
        <dbReference type="EC" id="2.1.1.192"/>
    </reaction>
</comment>
<comment type="cofactor">
    <cofactor evidence="1">
        <name>[4Fe-4S] cluster</name>
        <dbReference type="ChEBI" id="CHEBI:49883"/>
    </cofactor>
    <text evidence="1">Binds 1 [4Fe-4S] cluster. The cluster is coordinated with 3 cysteines and an exchangeable S-adenosyl-L-methionine.</text>
</comment>
<comment type="subcellular location">
    <subcellularLocation>
        <location evidence="1">Cytoplasm</location>
    </subcellularLocation>
</comment>
<comment type="miscellaneous">
    <text evidence="1">Reaction proceeds by a ping-pong mechanism involving intermediate methylation of a conserved cysteine residue.</text>
</comment>
<comment type="similarity">
    <text evidence="1">Belongs to the radical SAM superfamily. RlmN family.</text>
</comment>